<protein>
    <recommendedName>
        <fullName evidence="1">Sulfate adenylyltransferase subunit 2</fullName>
        <ecNumber evidence="1">2.7.7.4</ecNumber>
    </recommendedName>
    <alternativeName>
        <fullName evidence="1">ATP-sulfurylase small subunit</fullName>
    </alternativeName>
    <alternativeName>
        <fullName evidence="1">Sulfate adenylate transferase</fullName>
        <shortName evidence="1">SAT</shortName>
    </alternativeName>
</protein>
<proteinExistence type="inferred from homology"/>
<comment type="function">
    <text evidence="1">With CysN forms the ATP sulfurylase (ATPS) that catalyzes the adenylation of sulfate producing adenosine 5'-phosphosulfate (APS) and diphosphate, the first enzymatic step in sulfur assimilation pathway. APS synthesis involves the formation of a high-energy phosphoric-sulfuric acid anhydride bond driven by GTP hydrolysis by CysN coupled to ATP hydrolysis by CysD.</text>
</comment>
<comment type="catalytic activity">
    <reaction evidence="1">
        <text>sulfate + ATP + H(+) = adenosine 5'-phosphosulfate + diphosphate</text>
        <dbReference type="Rhea" id="RHEA:18133"/>
        <dbReference type="ChEBI" id="CHEBI:15378"/>
        <dbReference type="ChEBI" id="CHEBI:16189"/>
        <dbReference type="ChEBI" id="CHEBI:30616"/>
        <dbReference type="ChEBI" id="CHEBI:33019"/>
        <dbReference type="ChEBI" id="CHEBI:58243"/>
        <dbReference type="EC" id="2.7.7.4"/>
    </reaction>
</comment>
<comment type="pathway">
    <text evidence="1">Sulfur metabolism; hydrogen sulfide biosynthesis; sulfite from sulfate: step 1/3.</text>
</comment>
<comment type="subunit">
    <text evidence="1">Heterodimer composed of CysD, the smaller subunit, and CysN.</text>
</comment>
<comment type="similarity">
    <text evidence="1">Belongs to the PAPS reductase family. CysD subfamily.</text>
</comment>
<keyword id="KW-0067">ATP-binding</keyword>
<keyword id="KW-0547">Nucleotide-binding</keyword>
<keyword id="KW-0548">Nucleotidyltransferase</keyword>
<keyword id="KW-1185">Reference proteome</keyword>
<keyword id="KW-0808">Transferase</keyword>
<accession>Q39RP7</accession>
<organism>
    <name type="scientific">Geobacter metallireducens (strain ATCC 53774 / DSM 7210 / GS-15)</name>
    <dbReference type="NCBI Taxonomy" id="269799"/>
    <lineage>
        <taxon>Bacteria</taxon>
        <taxon>Pseudomonadati</taxon>
        <taxon>Thermodesulfobacteriota</taxon>
        <taxon>Desulfuromonadia</taxon>
        <taxon>Geobacterales</taxon>
        <taxon>Geobacteraceae</taxon>
        <taxon>Geobacter</taxon>
    </lineage>
</organism>
<sequence length="301" mass="34866">MRTTLTHLQQLEAESIHIIREVVAEFANPVMLYSIGKDSAVMLHLARKAFYPAPPPFPLLHVDTTWKFRDMIQFRDRMAAECGFDLIVHVNKEGVEQGISPFTHGSALYTDIMKTEGLKQALDKYRFDAAFGGARRDEEKSRAKERIFSFRSANHRWDPKNQRPELWNLYNTRIKQGESIRVFPLSNWTELDVWQYIHLENIPIVPLYYAAVRPVVERDGMLIMVDDERLELKPGETVQHKSVRFRTLGCYPLTGAVESTADTLPKIIQEMLLTRTSERQGRLIDHDQAGSMEKKKQEGYF</sequence>
<feature type="chain" id="PRO_1000008960" description="Sulfate adenylyltransferase subunit 2">
    <location>
        <begin position="1"/>
        <end position="301"/>
    </location>
</feature>
<name>CYSD_GEOMG</name>
<evidence type="ECO:0000255" key="1">
    <source>
        <dbReference type="HAMAP-Rule" id="MF_00064"/>
    </source>
</evidence>
<reference key="1">
    <citation type="journal article" date="2009" name="BMC Microbiol.">
        <title>The genome sequence of Geobacter metallireducens: features of metabolism, physiology and regulation common and dissimilar to Geobacter sulfurreducens.</title>
        <authorList>
            <person name="Aklujkar M."/>
            <person name="Krushkal J."/>
            <person name="DiBartolo G."/>
            <person name="Lapidus A."/>
            <person name="Land M.L."/>
            <person name="Lovley D.R."/>
        </authorList>
    </citation>
    <scope>NUCLEOTIDE SEQUENCE [LARGE SCALE GENOMIC DNA]</scope>
    <source>
        <strain>ATCC 53774 / DSM 7210 / GS-15</strain>
    </source>
</reference>
<gene>
    <name evidence="1" type="primary">cysD</name>
    <name type="ordered locus">Gmet_2859</name>
</gene>
<dbReference type="EC" id="2.7.7.4" evidence="1"/>
<dbReference type="EMBL" id="CP000148">
    <property type="protein sequence ID" value="ABB33077.1"/>
    <property type="molecule type" value="Genomic_DNA"/>
</dbReference>
<dbReference type="RefSeq" id="WP_011366112.1">
    <property type="nucleotide sequence ID" value="NC_007517.1"/>
</dbReference>
<dbReference type="SMR" id="Q39RP7"/>
<dbReference type="STRING" id="269799.Gmet_2859"/>
<dbReference type="KEGG" id="gme:Gmet_2859"/>
<dbReference type="eggNOG" id="COG0175">
    <property type="taxonomic scope" value="Bacteria"/>
</dbReference>
<dbReference type="HOGENOM" id="CLU_043026_0_0_7"/>
<dbReference type="UniPathway" id="UPA00140">
    <property type="reaction ID" value="UER00204"/>
</dbReference>
<dbReference type="Proteomes" id="UP000007073">
    <property type="component" value="Chromosome"/>
</dbReference>
<dbReference type="GO" id="GO:0005524">
    <property type="term" value="F:ATP binding"/>
    <property type="evidence" value="ECO:0007669"/>
    <property type="project" value="UniProtKB-KW"/>
</dbReference>
<dbReference type="GO" id="GO:0004781">
    <property type="term" value="F:sulfate adenylyltransferase (ATP) activity"/>
    <property type="evidence" value="ECO:0007669"/>
    <property type="project" value="UniProtKB-UniRule"/>
</dbReference>
<dbReference type="GO" id="GO:0070814">
    <property type="term" value="P:hydrogen sulfide biosynthetic process"/>
    <property type="evidence" value="ECO:0007669"/>
    <property type="project" value="UniProtKB-UniRule"/>
</dbReference>
<dbReference type="GO" id="GO:0000103">
    <property type="term" value="P:sulfate assimilation"/>
    <property type="evidence" value="ECO:0007669"/>
    <property type="project" value="UniProtKB-UniRule"/>
</dbReference>
<dbReference type="CDD" id="cd23946">
    <property type="entry name" value="Sulfate_adenylyltransferase_2"/>
    <property type="match status" value="1"/>
</dbReference>
<dbReference type="FunFam" id="3.40.50.620:FF:000002">
    <property type="entry name" value="Sulfate adenylyltransferase subunit 2"/>
    <property type="match status" value="1"/>
</dbReference>
<dbReference type="Gene3D" id="3.40.50.620">
    <property type="entry name" value="HUPs"/>
    <property type="match status" value="1"/>
</dbReference>
<dbReference type="HAMAP" id="MF_00064">
    <property type="entry name" value="Sulf_adenylyltr_sub2"/>
    <property type="match status" value="1"/>
</dbReference>
<dbReference type="InterPro" id="IPR002500">
    <property type="entry name" value="PAPS_reduct_dom"/>
</dbReference>
<dbReference type="InterPro" id="IPR014729">
    <property type="entry name" value="Rossmann-like_a/b/a_fold"/>
</dbReference>
<dbReference type="InterPro" id="IPR011784">
    <property type="entry name" value="SO4_adenylTrfase_ssu"/>
</dbReference>
<dbReference type="InterPro" id="IPR050128">
    <property type="entry name" value="Sulfate_adenylyltrnsfr_sub2"/>
</dbReference>
<dbReference type="NCBIfam" id="TIGR02039">
    <property type="entry name" value="CysD"/>
    <property type="match status" value="1"/>
</dbReference>
<dbReference type="NCBIfam" id="NF003587">
    <property type="entry name" value="PRK05253.1"/>
    <property type="match status" value="1"/>
</dbReference>
<dbReference type="NCBIfam" id="NF009214">
    <property type="entry name" value="PRK12563.1"/>
    <property type="match status" value="1"/>
</dbReference>
<dbReference type="PANTHER" id="PTHR43196">
    <property type="entry name" value="SULFATE ADENYLYLTRANSFERASE SUBUNIT 2"/>
    <property type="match status" value="1"/>
</dbReference>
<dbReference type="PANTHER" id="PTHR43196:SF1">
    <property type="entry name" value="SULFATE ADENYLYLTRANSFERASE SUBUNIT 2"/>
    <property type="match status" value="1"/>
</dbReference>
<dbReference type="Pfam" id="PF01507">
    <property type="entry name" value="PAPS_reduct"/>
    <property type="match status" value="1"/>
</dbReference>
<dbReference type="PIRSF" id="PIRSF002936">
    <property type="entry name" value="CysDAde_trans"/>
    <property type="match status" value="1"/>
</dbReference>
<dbReference type="SUPFAM" id="SSF52402">
    <property type="entry name" value="Adenine nucleotide alpha hydrolases-like"/>
    <property type="match status" value="1"/>
</dbReference>